<proteinExistence type="inferred from homology"/>
<evidence type="ECO:0000255" key="1">
    <source>
        <dbReference type="HAMAP-Rule" id="MF_00169"/>
    </source>
</evidence>
<name>AROQ_FRAT1</name>
<sequence>MDVLVINGPNLNLLGTRQPQFYGHKTLADINNDLLKIAKENNINIDFYQSNHEGQIIDKIQQTAAKIIIINPAAFTHTSVAIRDAFLAINKPFIEIHLSNIYNREEFRTKSFLSDIAYGCIFGFGPNGYTLALIEAINYINMKGE</sequence>
<protein>
    <recommendedName>
        <fullName evidence="1">3-dehydroquinate dehydratase</fullName>
        <shortName evidence="1">3-dehydroquinase</shortName>
        <ecNumber evidence="1">4.2.1.10</ecNumber>
    </recommendedName>
    <alternativeName>
        <fullName evidence="1">Type II DHQase</fullName>
    </alternativeName>
</protein>
<keyword id="KW-0028">Amino-acid biosynthesis</keyword>
<keyword id="KW-0057">Aromatic amino acid biosynthesis</keyword>
<keyword id="KW-0456">Lyase</keyword>
<dbReference type="EC" id="4.2.1.10" evidence="1"/>
<dbReference type="EMBL" id="AM286280">
    <property type="protein sequence ID" value="CAL08487.1"/>
    <property type="molecule type" value="Genomic_DNA"/>
</dbReference>
<dbReference type="RefSeq" id="WP_003016972.1">
    <property type="nucleotide sequence ID" value="NC_008245.1"/>
</dbReference>
<dbReference type="SMR" id="Q14IY5"/>
<dbReference type="GeneID" id="75263952"/>
<dbReference type="KEGG" id="ftf:FTF0471"/>
<dbReference type="HOGENOM" id="CLU_090968_1_0_6"/>
<dbReference type="UniPathway" id="UPA00053">
    <property type="reaction ID" value="UER00086"/>
</dbReference>
<dbReference type="GO" id="GO:0003855">
    <property type="term" value="F:3-dehydroquinate dehydratase activity"/>
    <property type="evidence" value="ECO:0007669"/>
    <property type="project" value="UniProtKB-UniRule"/>
</dbReference>
<dbReference type="GO" id="GO:0008652">
    <property type="term" value="P:amino acid biosynthetic process"/>
    <property type="evidence" value="ECO:0007669"/>
    <property type="project" value="UniProtKB-KW"/>
</dbReference>
<dbReference type="GO" id="GO:0009073">
    <property type="term" value="P:aromatic amino acid family biosynthetic process"/>
    <property type="evidence" value="ECO:0007669"/>
    <property type="project" value="UniProtKB-KW"/>
</dbReference>
<dbReference type="GO" id="GO:0009423">
    <property type="term" value="P:chorismate biosynthetic process"/>
    <property type="evidence" value="ECO:0007669"/>
    <property type="project" value="UniProtKB-UniRule"/>
</dbReference>
<dbReference type="GO" id="GO:0019631">
    <property type="term" value="P:quinate catabolic process"/>
    <property type="evidence" value="ECO:0007669"/>
    <property type="project" value="TreeGrafter"/>
</dbReference>
<dbReference type="CDD" id="cd00466">
    <property type="entry name" value="DHQase_II"/>
    <property type="match status" value="1"/>
</dbReference>
<dbReference type="Gene3D" id="3.40.50.9100">
    <property type="entry name" value="Dehydroquinase, class II"/>
    <property type="match status" value="1"/>
</dbReference>
<dbReference type="HAMAP" id="MF_00169">
    <property type="entry name" value="AroQ"/>
    <property type="match status" value="1"/>
</dbReference>
<dbReference type="InterPro" id="IPR001874">
    <property type="entry name" value="DHquinase_II"/>
</dbReference>
<dbReference type="InterPro" id="IPR018509">
    <property type="entry name" value="DHquinase_II_CS"/>
</dbReference>
<dbReference type="InterPro" id="IPR036441">
    <property type="entry name" value="DHquinase_II_sf"/>
</dbReference>
<dbReference type="NCBIfam" id="TIGR01088">
    <property type="entry name" value="aroQ"/>
    <property type="match status" value="1"/>
</dbReference>
<dbReference type="NCBIfam" id="NF003804">
    <property type="entry name" value="PRK05395.1-1"/>
    <property type="match status" value="1"/>
</dbReference>
<dbReference type="NCBIfam" id="NF003805">
    <property type="entry name" value="PRK05395.1-2"/>
    <property type="match status" value="1"/>
</dbReference>
<dbReference type="NCBIfam" id="NF003806">
    <property type="entry name" value="PRK05395.1-3"/>
    <property type="match status" value="1"/>
</dbReference>
<dbReference type="NCBIfam" id="NF003807">
    <property type="entry name" value="PRK05395.1-4"/>
    <property type="match status" value="1"/>
</dbReference>
<dbReference type="PANTHER" id="PTHR21272">
    <property type="entry name" value="CATABOLIC 3-DEHYDROQUINASE"/>
    <property type="match status" value="1"/>
</dbReference>
<dbReference type="PANTHER" id="PTHR21272:SF3">
    <property type="entry name" value="CATABOLIC 3-DEHYDROQUINASE"/>
    <property type="match status" value="1"/>
</dbReference>
<dbReference type="Pfam" id="PF01220">
    <property type="entry name" value="DHquinase_II"/>
    <property type="match status" value="1"/>
</dbReference>
<dbReference type="PIRSF" id="PIRSF001399">
    <property type="entry name" value="DHquinase_II"/>
    <property type="match status" value="1"/>
</dbReference>
<dbReference type="SUPFAM" id="SSF52304">
    <property type="entry name" value="Type II 3-dehydroquinate dehydratase"/>
    <property type="match status" value="1"/>
</dbReference>
<dbReference type="PROSITE" id="PS01029">
    <property type="entry name" value="DEHYDROQUINASE_II"/>
    <property type="match status" value="1"/>
</dbReference>
<reference key="1">
    <citation type="journal article" date="2007" name="PLoS ONE">
        <title>Genome sequencing shows that European isolates of Francisella tularensis subspecies tularensis are almost identical to US laboratory strain Schu S4.</title>
        <authorList>
            <person name="Chaudhuri R.R."/>
            <person name="Ren C.-P."/>
            <person name="Desmond L."/>
            <person name="Vincent G.A."/>
            <person name="Silman N.J."/>
            <person name="Brehm J.K."/>
            <person name="Elmore M.J."/>
            <person name="Hudson M.J."/>
            <person name="Forsman M."/>
            <person name="Isherwood K.E."/>
            <person name="Gurycova D."/>
            <person name="Minton N.P."/>
            <person name="Titball R.W."/>
            <person name="Pallen M.J."/>
            <person name="Vipond R."/>
        </authorList>
    </citation>
    <scope>NUCLEOTIDE SEQUENCE [LARGE SCALE GENOMIC DNA]</scope>
    <source>
        <strain>FSC 198</strain>
    </source>
</reference>
<gene>
    <name evidence="1" type="primary">aroQ</name>
    <name type="ordered locus">FTF0471</name>
</gene>
<organism>
    <name type="scientific">Francisella tularensis subsp. tularensis (strain FSC 198)</name>
    <dbReference type="NCBI Taxonomy" id="393115"/>
    <lineage>
        <taxon>Bacteria</taxon>
        <taxon>Pseudomonadati</taxon>
        <taxon>Pseudomonadota</taxon>
        <taxon>Gammaproteobacteria</taxon>
        <taxon>Thiotrichales</taxon>
        <taxon>Francisellaceae</taxon>
        <taxon>Francisella</taxon>
    </lineage>
</organism>
<accession>Q14IY5</accession>
<feature type="chain" id="PRO_1000077035" description="3-dehydroquinate dehydratase">
    <location>
        <begin position="1"/>
        <end position="145"/>
    </location>
</feature>
<feature type="active site" description="Proton acceptor" evidence="1">
    <location>
        <position position="22"/>
    </location>
</feature>
<feature type="active site" description="Proton donor" evidence="1">
    <location>
        <position position="97"/>
    </location>
</feature>
<feature type="binding site" evidence="1">
    <location>
        <position position="71"/>
    </location>
    <ligand>
        <name>substrate</name>
    </ligand>
</feature>
<feature type="binding site" evidence="1">
    <location>
        <position position="77"/>
    </location>
    <ligand>
        <name>substrate</name>
    </ligand>
</feature>
<feature type="binding site" evidence="1">
    <location>
        <position position="84"/>
    </location>
    <ligand>
        <name>substrate</name>
    </ligand>
</feature>
<feature type="binding site" evidence="1">
    <location>
        <begin position="98"/>
        <end position="99"/>
    </location>
    <ligand>
        <name>substrate</name>
    </ligand>
</feature>
<feature type="binding site" evidence="1">
    <location>
        <position position="108"/>
    </location>
    <ligand>
        <name>substrate</name>
    </ligand>
</feature>
<feature type="site" description="Transition state stabilizer" evidence="1">
    <location>
        <position position="17"/>
    </location>
</feature>
<comment type="function">
    <text evidence="1">Catalyzes a trans-dehydration via an enolate intermediate.</text>
</comment>
<comment type="catalytic activity">
    <reaction evidence="1">
        <text>3-dehydroquinate = 3-dehydroshikimate + H2O</text>
        <dbReference type="Rhea" id="RHEA:21096"/>
        <dbReference type="ChEBI" id="CHEBI:15377"/>
        <dbReference type="ChEBI" id="CHEBI:16630"/>
        <dbReference type="ChEBI" id="CHEBI:32364"/>
        <dbReference type="EC" id="4.2.1.10"/>
    </reaction>
</comment>
<comment type="pathway">
    <text evidence="1">Metabolic intermediate biosynthesis; chorismate biosynthesis; chorismate from D-erythrose 4-phosphate and phosphoenolpyruvate: step 3/7.</text>
</comment>
<comment type="subunit">
    <text evidence="1">Homododecamer.</text>
</comment>
<comment type="similarity">
    <text evidence="1">Belongs to the type-II 3-dehydroquinase family.</text>
</comment>